<evidence type="ECO:0000255" key="1">
    <source>
        <dbReference type="HAMAP-Rule" id="MF_00713"/>
    </source>
</evidence>
<reference key="1">
    <citation type="journal article" date="2001" name="Proc. Natl. Acad. Sci. U.S.A.">
        <title>The complete genome of the crenarchaeon Sulfolobus solfataricus P2.</title>
        <authorList>
            <person name="She Q."/>
            <person name="Singh R.K."/>
            <person name="Confalonieri F."/>
            <person name="Zivanovic Y."/>
            <person name="Allard G."/>
            <person name="Awayez M.J."/>
            <person name="Chan-Weiher C.C.-Y."/>
            <person name="Clausen I.G."/>
            <person name="Curtis B.A."/>
            <person name="De Moors A."/>
            <person name="Erauso G."/>
            <person name="Fletcher C."/>
            <person name="Gordon P.M.K."/>
            <person name="Heikamp-de Jong I."/>
            <person name="Jeffries A.C."/>
            <person name="Kozera C.J."/>
            <person name="Medina N."/>
            <person name="Peng X."/>
            <person name="Thi-Ngoc H.P."/>
            <person name="Redder P."/>
            <person name="Schenk M.E."/>
            <person name="Theriault C."/>
            <person name="Tolstrup N."/>
            <person name="Charlebois R.L."/>
            <person name="Doolittle W.F."/>
            <person name="Duguet M."/>
            <person name="Gaasterland T."/>
            <person name="Garrett R.A."/>
            <person name="Ragan M.A."/>
            <person name="Sensen C.W."/>
            <person name="Van der Oost J."/>
        </authorList>
    </citation>
    <scope>NUCLEOTIDE SEQUENCE [LARGE SCALE GENOMIC DNA]</scope>
    <source>
        <strain>ATCC 35092 / DSM 1617 / JCM 11322 / P2</strain>
    </source>
</reference>
<organism>
    <name type="scientific">Saccharolobus solfataricus (strain ATCC 35092 / DSM 1617 / JCM 11322 / P2)</name>
    <name type="common">Sulfolobus solfataricus</name>
    <dbReference type="NCBI Taxonomy" id="273057"/>
    <lineage>
        <taxon>Archaea</taxon>
        <taxon>Thermoproteota</taxon>
        <taxon>Thermoprotei</taxon>
        <taxon>Sulfolobales</taxon>
        <taxon>Sulfolobaceae</taxon>
        <taxon>Saccharolobus</taxon>
    </lineage>
</organism>
<dbReference type="EC" id="1.4.4.2" evidence="1"/>
<dbReference type="EMBL" id="AE006641">
    <property type="protein sequence ID" value="AAK41199.1"/>
    <property type="molecule type" value="Genomic_DNA"/>
</dbReference>
<dbReference type="PIR" id="H90242">
    <property type="entry name" value="H90242"/>
</dbReference>
<dbReference type="RefSeq" id="WP_009992348.1">
    <property type="nucleotide sequence ID" value="NC_002754.1"/>
</dbReference>
<dbReference type="SMR" id="Q97ZI9"/>
<dbReference type="FunCoup" id="Q97ZI9">
    <property type="interactions" value="134"/>
</dbReference>
<dbReference type="STRING" id="273057.SSO0917"/>
<dbReference type="PaxDb" id="273057-SSO0917"/>
<dbReference type="EnsemblBacteria" id="AAK41199">
    <property type="protein sequence ID" value="AAK41199"/>
    <property type="gene ID" value="SSO0917"/>
</dbReference>
<dbReference type="GeneID" id="44129847"/>
<dbReference type="KEGG" id="sso:SSO0917"/>
<dbReference type="PATRIC" id="fig|273057.12.peg.918"/>
<dbReference type="eggNOG" id="arCOG00076">
    <property type="taxonomic scope" value="Archaea"/>
</dbReference>
<dbReference type="HOGENOM" id="CLU_004620_5_0_2"/>
<dbReference type="InParanoid" id="Q97ZI9"/>
<dbReference type="PhylomeDB" id="Q97ZI9"/>
<dbReference type="Proteomes" id="UP000001974">
    <property type="component" value="Chromosome"/>
</dbReference>
<dbReference type="GO" id="GO:0005829">
    <property type="term" value="C:cytosol"/>
    <property type="evidence" value="ECO:0000318"/>
    <property type="project" value="GO_Central"/>
</dbReference>
<dbReference type="GO" id="GO:0005960">
    <property type="term" value="C:glycine cleavage complex"/>
    <property type="evidence" value="ECO:0000318"/>
    <property type="project" value="GO_Central"/>
</dbReference>
<dbReference type="GO" id="GO:0016594">
    <property type="term" value="F:glycine binding"/>
    <property type="evidence" value="ECO:0000318"/>
    <property type="project" value="GO_Central"/>
</dbReference>
<dbReference type="GO" id="GO:0004375">
    <property type="term" value="F:glycine dehydrogenase (decarboxylating) activity"/>
    <property type="evidence" value="ECO:0000318"/>
    <property type="project" value="GO_Central"/>
</dbReference>
<dbReference type="GO" id="GO:0030170">
    <property type="term" value="F:pyridoxal phosphate binding"/>
    <property type="evidence" value="ECO:0000318"/>
    <property type="project" value="GO_Central"/>
</dbReference>
<dbReference type="GO" id="GO:0019464">
    <property type="term" value="P:glycine decarboxylation via glycine cleavage system"/>
    <property type="evidence" value="ECO:0000318"/>
    <property type="project" value="GO_Central"/>
</dbReference>
<dbReference type="CDD" id="cd00613">
    <property type="entry name" value="GDC-P"/>
    <property type="match status" value="1"/>
</dbReference>
<dbReference type="FunFam" id="3.40.640.10:FF:000224">
    <property type="entry name" value="Probable glycine dehydrogenase (decarboxylating) subunit 2"/>
    <property type="match status" value="1"/>
</dbReference>
<dbReference type="FunFam" id="3.90.1150.10:FF:000014">
    <property type="entry name" value="Probable glycine dehydrogenase (decarboxylating) subunit 2"/>
    <property type="match status" value="1"/>
</dbReference>
<dbReference type="Gene3D" id="6.20.440.10">
    <property type="match status" value="1"/>
</dbReference>
<dbReference type="Gene3D" id="3.90.1150.10">
    <property type="entry name" value="Aspartate Aminotransferase, domain 1"/>
    <property type="match status" value="1"/>
</dbReference>
<dbReference type="Gene3D" id="3.40.640.10">
    <property type="entry name" value="Type I PLP-dependent aspartate aminotransferase-like (Major domain)"/>
    <property type="match status" value="1"/>
</dbReference>
<dbReference type="HAMAP" id="MF_00713">
    <property type="entry name" value="GcvPB"/>
    <property type="match status" value="1"/>
</dbReference>
<dbReference type="InterPro" id="IPR023012">
    <property type="entry name" value="GcvPB"/>
</dbReference>
<dbReference type="InterPro" id="IPR049316">
    <property type="entry name" value="GDC-P_C"/>
</dbReference>
<dbReference type="InterPro" id="IPR049315">
    <property type="entry name" value="GDC-P_N"/>
</dbReference>
<dbReference type="InterPro" id="IPR020581">
    <property type="entry name" value="GDC_P"/>
</dbReference>
<dbReference type="InterPro" id="IPR015424">
    <property type="entry name" value="PyrdxlP-dep_Trfase"/>
</dbReference>
<dbReference type="InterPro" id="IPR015421">
    <property type="entry name" value="PyrdxlP-dep_Trfase_major"/>
</dbReference>
<dbReference type="InterPro" id="IPR015422">
    <property type="entry name" value="PyrdxlP-dep_Trfase_small"/>
</dbReference>
<dbReference type="NCBIfam" id="NF003346">
    <property type="entry name" value="PRK04366.1"/>
    <property type="match status" value="1"/>
</dbReference>
<dbReference type="PANTHER" id="PTHR11773:SF1">
    <property type="entry name" value="GLYCINE DEHYDROGENASE (DECARBOXYLATING), MITOCHONDRIAL"/>
    <property type="match status" value="1"/>
</dbReference>
<dbReference type="PANTHER" id="PTHR11773">
    <property type="entry name" value="GLYCINE DEHYDROGENASE, DECARBOXYLATING"/>
    <property type="match status" value="1"/>
</dbReference>
<dbReference type="Pfam" id="PF21478">
    <property type="entry name" value="GcvP2_C"/>
    <property type="match status" value="1"/>
</dbReference>
<dbReference type="Pfam" id="PF02347">
    <property type="entry name" value="GDC-P"/>
    <property type="match status" value="1"/>
</dbReference>
<dbReference type="SUPFAM" id="SSF53383">
    <property type="entry name" value="PLP-dependent transferases"/>
    <property type="match status" value="1"/>
</dbReference>
<name>GCSPB_SACS2</name>
<protein>
    <recommendedName>
        <fullName evidence="1">Probable glycine dehydrogenase (decarboxylating) subunit 2</fullName>
        <ecNumber evidence="1">1.4.4.2</ecNumber>
    </recommendedName>
    <alternativeName>
        <fullName evidence="1">Glycine cleavage system P-protein subunit 2</fullName>
    </alternativeName>
    <alternativeName>
        <fullName evidence="1">Glycine decarboxylase subunit 2</fullName>
    </alternativeName>
    <alternativeName>
        <fullName evidence="1">Glycine dehydrogenase (aminomethyl-transferring) subunit 2</fullName>
    </alternativeName>
</protein>
<feature type="chain" id="PRO_0000167031" description="Probable glycine dehydrogenase (decarboxylating) subunit 2">
    <location>
        <begin position="1"/>
        <end position="508"/>
    </location>
</feature>
<feature type="modified residue" description="N6-(pyridoxal phosphate)lysine" evidence="1">
    <location>
        <position position="277"/>
    </location>
</feature>
<proteinExistence type="inferred from homology"/>
<comment type="function">
    <text evidence="1">The glycine cleavage system catalyzes the degradation of glycine. The P protein binds the alpha-amino group of glycine through its pyridoxal phosphate cofactor; CO(2) is released and the remaining methylamine moiety is then transferred to the lipoamide cofactor of the H protein.</text>
</comment>
<comment type="catalytic activity">
    <reaction evidence="1">
        <text>N(6)-[(R)-lipoyl]-L-lysyl-[glycine-cleavage complex H protein] + glycine + H(+) = N(6)-[(R)-S(8)-aminomethyldihydrolipoyl]-L-lysyl-[glycine-cleavage complex H protein] + CO2</text>
        <dbReference type="Rhea" id="RHEA:24304"/>
        <dbReference type="Rhea" id="RHEA-COMP:10494"/>
        <dbReference type="Rhea" id="RHEA-COMP:10495"/>
        <dbReference type="ChEBI" id="CHEBI:15378"/>
        <dbReference type="ChEBI" id="CHEBI:16526"/>
        <dbReference type="ChEBI" id="CHEBI:57305"/>
        <dbReference type="ChEBI" id="CHEBI:83099"/>
        <dbReference type="ChEBI" id="CHEBI:83143"/>
        <dbReference type="EC" id="1.4.4.2"/>
    </reaction>
</comment>
<comment type="cofactor">
    <cofactor evidence="1">
        <name>pyridoxal 5'-phosphate</name>
        <dbReference type="ChEBI" id="CHEBI:597326"/>
    </cofactor>
</comment>
<comment type="subunit">
    <text evidence="1">The glycine cleavage system is composed of four proteins: P, T, L and H. In this organism, the P 'protein' is a heterodimer of two subunits.</text>
</comment>
<comment type="similarity">
    <text evidence="1">Belongs to the GcvP family. C-terminal subunit subfamily.</text>
</comment>
<keyword id="KW-0560">Oxidoreductase</keyword>
<keyword id="KW-0663">Pyridoxal phosphate</keyword>
<keyword id="KW-1185">Reference proteome</keyword>
<gene>
    <name evidence="1" type="primary">gcvPB</name>
    <name type="ordered locus">SSO0917</name>
</gene>
<sequence>MWRQAKWNEPLIFELNKSGAARQGFLINKDEEIRSQIKEMKIPKNLLRENEPDLPSLSELEVVRHFVRLSQMNFGVDIGIMPLGSCTMKYNPKIEEKATAITEFHHPLEDEDYIQGILEMIYELQNWFSEITGMDECSLQVPAGSAGEFAGVLMIKKYHEEHNRNYKDTILVADTAHGTNPASAAMAGYKVMYVKSNAEGLVDMDILREIVNDKTAGFMLTNPNTLGLFEENILEISKIIHSTNAVLYYDGANLNGVLGIARPGDMGFDIVHLNLHKTFAVPHGGGGPGAGAICAKGELVNYLPYPMVEKVNGKYKLSKIPKNSIGKIATFYGNVGNLARSFAYILGLGPQGIQMIGKMSTLATNYLIAKLRDVKELELIAPNRHRKHEVVFSVKQLMENYGVSANDVAKALLDNGFYAPTIYFPPIVEEALMIEPTETETKETLDMFAETLKKIVNDAKINPEQVMKSPNNTSIARLDQAYANHPSTITPTYRVLRLRRLGKIDYLK</sequence>
<accession>Q97ZI9</accession>